<name>BETA_PSESM</name>
<sequence>MTTQSEYDYIIIGAGSAGNTLAARLTEDAGVTVLLLEAGGPDYRLDFRTQMPAALAFPLQGRRYNWAYETEPEPHMDNRRMECGRGKGLGGSSLINGMCYIRGNAMDYDGWAKEPGLEDWSYLDCLPYFRKAETRDIGPNDYHGGEGPVSVTTPKAGNNPLFHAMVEAGVQAGFPRTDDLNGYQQEGFGPMDRTVTPKGRRASTARGYLDEAKKRDTLSIVTHALTDRILFEGKRAVGVAYLVGDSDTRIEVRARKEVLLCGGAIASPQILQRSGVGPAEVLNKLDIPVVHDLPGVGQNLQDHLEMYLQYACTQPVSLYPSLKWWNQPAIGAEWMFLGTGIGASNQFEAGGFIRSSEAFEWPNIQYHFLPVAINYNGTKGVQEHGFQAHVGSMRSPSRGRVHVKSKDPREYPSILFNYMASDQDWQEFRDGIRLTREIMQQPALDPYRGREISPGIDVQSDEALDQFVREHAETAYHPSCSCKMGTDEMAVVDGQGRVHGMQNLRVVDASIMPIITTGNLNAPTIMIAEKIADKIRGRQPLPRSTADYFVAGDKPARGKPLREISHQA</sequence>
<comment type="function">
    <text evidence="1">Involved in the biosynthesis of the osmoprotectant glycine betaine. Catalyzes the oxidation of choline to betaine aldehyde and betaine aldehyde to glycine betaine at the same rate.</text>
</comment>
<comment type="catalytic activity">
    <reaction evidence="1">
        <text>choline + A = betaine aldehyde + AH2</text>
        <dbReference type="Rhea" id="RHEA:17433"/>
        <dbReference type="ChEBI" id="CHEBI:13193"/>
        <dbReference type="ChEBI" id="CHEBI:15354"/>
        <dbReference type="ChEBI" id="CHEBI:15710"/>
        <dbReference type="ChEBI" id="CHEBI:17499"/>
        <dbReference type="EC" id="1.1.99.1"/>
    </reaction>
</comment>
<comment type="catalytic activity">
    <reaction evidence="1">
        <text>betaine aldehyde + NAD(+) + H2O = glycine betaine + NADH + 2 H(+)</text>
        <dbReference type="Rhea" id="RHEA:15305"/>
        <dbReference type="ChEBI" id="CHEBI:15377"/>
        <dbReference type="ChEBI" id="CHEBI:15378"/>
        <dbReference type="ChEBI" id="CHEBI:15710"/>
        <dbReference type="ChEBI" id="CHEBI:17750"/>
        <dbReference type="ChEBI" id="CHEBI:57540"/>
        <dbReference type="ChEBI" id="CHEBI:57945"/>
        <dbReference type="EC" id="1.2.1.8"/>
    </reaction>
</comment>
<comment type="cofactor">
    <cofactor evidence="1">
        <name>FAD</name>
        <dbReference type="ChEBI" id="CHEBI:57692"/>
    </cofactor>
</comment>
<comment type="pathway">
    <text evidence="1">Amine and polyamine biosynthesis; betaine biosynthesis via choline pathway; betaine aldehyde from choline (cytochrome c reductase route): step 1/1.</text>
</comment>
<comment type="similarity">
    <text evidence="1">Belongs to the GMC oxidoreductase family.</text>
</comment>
<gene>
    <name evidence="1" type="primary">betA</name>
    <name type="ordered locus">PSPTO_0443</name>
</gene>
<dbReference type="EC" id="1.1.99.1" evidence="1"/>
<dbReference type="EC" id="1.2.1.8" evidence="1"/>
<dbReference type="EMBL" id="AE016853">
    <property type="protein sequence ID" value="AAO53987.1"/>
    <property type="molecule type" value="Genomic_DNA"/>
</dbReference>
<dbReference type="RefSeq" id="NP_790292.1">
    <property type="nucleotide sequence ID" value="NC_004578.1"/>
</dbReference>
<dbReference type="RefSeq" id="WP_005763658.1">
    <property type="nucleotide sequence ID" value="NC_004578.1"/>
</dbReference>
<dbReference type="SMR" id="Q88AE7"/>
<dbReference type="STRING" id="223283.PSPTO_0443"/>
<dbReference type="GeneID" id="1182052"/>
<dbReference type="KEGG" id="pst:PSPTO_0443"/>
<dbReference type="PATRIC" id="fig|223283.9.peg.462"/>
<dbReference type="eggNOG" id="COG2303">
    <property type="taxonomic scope" value="Bacteria"/>
</dbReference>
<dbReference type="HOGENOM" id="CLU_002865_7_1_6"/>
<dbReference type="OrthoDB" id="9785276at2"/>
<dbReference type="PhylomeDB" id="Q88AE7"/>
<dbReference type="UniPathway" id="UPA00529">
    <property type="reaction ID" value="UER00385"/>
</dbReference>
<dbReference type="Proteomes" id="UP000002515">
    <property type="component" value="Chromosome"/>
</dbReference>
<dbReference type="GO" id="GO:0016020">
    <property type="term" value="C:membrane"/>
    <property type="evidence" value="ECO:0007669"/>
    <property type="project" value="TreeGrafter"/>
</dbReference>
<dbReference type="GO" id="GO:0008802">
    <property type="term" value="F:betaine-aldehyde dehydrogenase (NAD+) activity"/>
    <property type="evidence" value="ECO:0007669"/>
    <property type="project" value="UniProtKB-EC"/>
</dbReference>
<dbReference type="GO" id="GO:0008812">
    <property type="term" value="F:choline dehydrogenase activity"/>
    <property type="evidence" value="ECO:0007669"/>
    <property type="project" value="UniProtKB-UniRule"/>
</dbReference>
<dbReference type="GO" id="GO:0050660">
    <property type="term" value="F:flavin adenine dinucleotide binding"/>
    <property type="evidence" value="ECO:0007669"/>
    <property type="project" value="InterPro"/>
</dbReference>
<dbReference type="GO" id="GO:0019285">
    <property type="term" value="P:glycine betaine biosynthetic process from choline"/>
    <property type="evidence" value="ECO:0007669"/>
    <property type="project" value="UniProtKB-UniRule"/>
</dbReference>
<dbReference type="Gene3D" id="3.50.50.60">
    <property type="entry name" value="FAD/NAD(P)-binding domain"/>
    <property type="match status" value="1"/>
</dbReference>
<dbReference type="Gene3D" id="3.30.560.10">
    <property type="entry name" value="Glucose Oxidase, domain 3"/>
    <property type="match status" value="1"/>
</dbReference>
<dbReference type="HAMAP" id="MF_00750">
    <property type="entry name" value="Choline_dehydrogen"/>
    <property type="match status" value="1"/>
</dbReference>
<dbReference type="InterPro" id="IPR011533">
    <property type="entry name" value="BetA"/>
</dbReference>
<dbReference type="InterPro" id="IPR036188">
    <property type="entry name" value="FAD/NAD-bd_sf"/>
</dbReference>
<dbReference type="InterPro" id="IPR012132">
    <property type="entry name" value="GMC_OxRdtase"/>
</dbReference>
<dbReference type="InterPro" id="IPR000172">
    <property type="entry name" value="GMC_OxRdtase_N"/>
</dbReference>
<dbReference type="InterPro" id="IPR007867">
    <property type="entry name" value="GMC_OxRtase_C"/>
</dbReference>
<dbReference type="NCBIfam" id="TIGR01810">
    <property type="entry name" value="betA"/>
    <property type="match status" value="1"/>
</dbReference>
<dbReference type="NCBIfam" id="NF002550">
    <property type="entry name" value="PRK02106.1"/>
    <property type="match status" value="1"/>
</dbReference>
<dbReference type="PANTHER" id="PTHR11552:SF147">
    <property type="entry name" value="CHOLINE DEHYDROGENASE, MITOCHONDRIAL"/>
    <property type="match status" value="1"/>
</dbReference>
<dbReference type="PANTHER" id="PTHR11552">
    <property type="entry name" value="GLUCOSE-METHANOL-CHOLINE GMC OXIDOREDUCTASE"/>
    <property type="match status" value="1"/>
</dbReference>
<dbReference type="Pfam" id="PF05199">
    <property type="entry name" value="GMC_oxred_C"/>
    <property type="match status" value="1"/>
</dbReference>
<dbReference type="Pfam" id="PF00732">
    <property type="entry name" value="GMC_oxred_N"/>
    <property type="match status" value="1"/>
</dbReference>
<dbReference type="PIRSF" id="PIRSF000137">
    <property type="entry name" value="Alcohol_oxidase"/>
    <property type="match status" value="1"/>
</dbReference>
<dbReference type="SUPFAM" id="SSF54373">
    <property type="entry name" value="FAD-linked reductases, C-terminal domain"/>
    <property type="match status" value="1"/>
</dbReference>
<dbReference type="SUPFAM" id="SSF51905">
    <property type="entry name" value="FAD/NAD(P)-binding domain"/>
    <property type="match status" value="1"/>
</dbReference>
<dbReference type="PROSITE" id="PS00623">
    <property type="entry name" value="GMC_OXRED_1"/>
    <property type="match status" value="1"/>
</dbReference>
<dbReference type="PROSITE" id="PS00624">
    <property type="entry name" value="GMC_OXRED_2"/>
    <property type="match status" value="1"/>
</dbReference>
<accession>Q88AE7</accession>
<feature type="chain" id="PRO_0000205592" description="Oxygen-dependent choline dehydrogenase">
    <location>
        <begin position="1"/>
        <end position="568"/>
    </location>
</feature>
<feature type="active site" description="Proton acceptor" evidence="1">
    <location>
        <position position="477"/>
    </location>
</feature>
<feature type="binding site" evidence="1">
    <location>
        <begin position="8"/>
        <end position="37"/>
    </location>
    <ligand>
        <name>FAD</name>
        <dbReference type="ChEBI" id="CHEBI:57692"/>
    </ligand>
</feature>
<evidence type="ECO:0000255" key="1">
    <source>
        <dbReference type="HAMAP-Rule" id="MF_00750"/>
    </source>
</evidence>
<organism>
    <name type="scientific">Pseudomonas syringae pv. tomato (strain ATCC BAA-871 / DC3000)</name>
    <dbReference type="NCBI Taxonomy" id="223283"/>
    <lineage>
        <taxon>Bacteria</taxon>
        <taxon>Pseudomonadati</taxon>
        <taxon>Pseudomonadota</taxon>
        <taxon>Gammaproteobacteria</taxon>
        <taxon>Pseudomonadales</taxon>
        <taxon>Pseudomonadaceae</taxon>
        <taxon>Pseudomonas</taxon>
    </lineage>
</organism>
<keyword id="KW-0274">FAD</keyword>
<keyword id="KW-0285">Flavoprotein</keyword>
<keyword id="KW-0520">NAD</keyword>
<keyword id="KW-0560">Oxidoreductase</keyword>
<keyword id="KW-1185">Reference proteome</keyword>
<protein>
    <recommendedName>
        <fullName evidence="1">Oxygen-dependent choline dehydrogenase</fullName>
        <shortName evidence="1">CDH</shortName>
        <shortName evidence="1">CHD</shortName>
        <ecNumber evidence="1">1.1.99.1</ecNumber>
    </recommendedName>
    <alternativeName>
        <fullName evidence="1">Betaine aldehyde dehydrogenase</fullName>
        <shortName evidence="1">BADH</shortName>
        <ecNumber evidence="1">1.2.1.8</ecNumber>
    </alternativeName>
</protein>
<reference key="1">
    <citation type="journal article" date="2003" name="Proc. Natl. Acad. Sci. U.S.A.">
        <title>The complete genome sequence of the Arabidopsis and tomato pathogen Pseudomonas syringae pv. tomato DC3000.</title>
        <authorList>
            <person name="Buell C.R."/>
            <person name="Joardar V."/>
            <person name="Lindeberg M."/>
            <person name="Selengut J."/>
            <person name="Paulsen I.T."/>
            <person name="Gwinn M.L."/>
            <person name="Dodson R.J."/>
            <person name="DeBoy R.T."/>
            <person name="Durkin A.S."/>
            <person name="Kolonay J.F."/>
            <person name="Madupu R."/>
            <person name="Daugherty S.C."/>
            <person name="Brinkac L.M."/>
            <person name="Beanan M.J."/>
            <person name="Haft D.H."/>
            <person name="Nelson W.C."/>
            <person name="Davidsen T.M."/>
            <person name="Zafar N."/>
            <person name="Zhou L."/>
            <person name="Liu J."/>
            <person name="Yuan Q."/>
            <person name="Khouri H.M."/>
            <person name="Fedorova N.B."/>
            <person name="Tran B."/>
            <person name="Russell D."/>
            <person name="Berry K.J."/>
            <person name="Utterback T.R."/>
            <person name="Van Aken S.E."/>
            <person name="Feldblyum T.V."/>
            <person name="D'Ascenzo M."/>
            <person name="Deng W.-L."/>
            <person name="Ramos A.R."/>
            <person name="Alfano J.R."/>
            <person name="Cartinhour S."/>
            <person name="Chatterjee A.K."/>
            <person name="Delaney T.P."/>
            <person name="Lazarowitz S.G."/>
            <person name="Martin G.B."/>
            <person name="Schneider D.J."/>
            <person name="Tang X."/>
            <person name="Bender C.L."/>
            <person name="White O."/>
            <person name="Fraser C.M."/>
            <person name="Collmer A."/>
        </authorList>
    </citation>
    <scope>NUCLEOTIDE SEQUENCE [LARGE SCALE GENOMIC DNA]</scope>
    <source>
        <strain>ATCC BAA-871 / DC3000</strain>
    </source>
</reference>
<proteinExistence type="inferred from homology"/>